<dbReference type="EC" id="3.2.1.4"/>
<dbReference type="EMBL" id="AE005174">
    <property type="protein sequence ID" value="AAG58673.1"/>
    <property type="molecule type" value="Genomic_DNA"/>
</dbReference>
<dbReference type="EMBL" id="BA000007">
    <property type="protein sequence ID" value="BAB37834.1"/>
    <property type="molecule type" value="Genomic_DNA"/>
</dbReference>
<dbReference type="PIR" id="C91180">
    <property type="entry name" value="C91180"/>
</dbReference>
<dbReference type="PIR" id="E86026">
    <property type="entry name" value="E86026"/>
</dbReference>
<dbReference type="RefSeq" id="NP_312438.1">
    <property type="nucleotide sequence ID" value="NC_002695.1"/>
</dbReference>
<dbReference type="RefSeq" id="WP_001302749.1">
    <property type="nucleotide sequence ID" value="NZ_SWKA01000005.1"/>
</dbReference>
<dbReference type="SMR" id="Q8X5L9"/>
<dbReference type="STRING" id="155864.Z4946"/>
<dbReference type="CAZy" id="GH8">
    <property type="family name" value="Glycoside Hydrolase Family 8"/>
</dbReference>
<dbReference type="GeneID" id="915724"/>
<dbReference type="KEGG" id="ece:Z4946"/>
<dbReference type="KEGG" id="ecs:ECs_4411"/>
<dbReference type="PATRIC" id="fig|386585.9.peg.4612"/>
<dbReference type="eggNOG" id="COG3405">
    <property type="taxonomic scope" value="Bacteria"/>
</dbReference>
<dbReference type="HOGENOM" id="CLU_037297_0_0_6"/>
<dbReference type="OMA" id="IRVYLWV"/>
<dbReference type="UniPathway" id="UPA00694"/>
<dbReference type="Proteomes" id="UP000000558">
    <property type="component" value="Chromosome"/>
</dbReference>
<dbReference type="Proteomes" id="UP000002519">
    <property type="component" value="Chromosome"/>
</dbReference>
<dbReference type="GO" id="GO:0005576">
    <property type="term" value="C:extracellular region"/>
    <property type="evidence" value="ECO:0007669"/>
    <property type="project" value="UniProtKB-SubCell"/>
</dbReference>
<dbReference type="GO" id="GO:0008810">
    <property type="term" value="F:cellulase activity"/>
    <property type="evidence" value="ECO:0007669"/>
    <property type="project" value="UniProtKB-EC"/>
</dbReference>
<dbReference type="GO" id="GO:0030245">
    <property type="term" value="P:cellulose catabolic process"/>
    <property type="evidence" value="ECO:0007669"/>
    <property type="project" value="UniProtKB-KW"/>
</dbReference>
<dbReference type="FunFam" id="1.50.10.10:FF:000036">
    <property type="entry name" value="Glucanase"/>
    <property type="match status" value="1"/>
</dbReference>
<dbReference type="Gene3D" id="1.50.10.10">
    <property type="match status" value="1"/>
</dbReference>
<dbReference type="InterPro" id="IPR008928">
    <property type="entry name" value="6-hairpin_glycosidase_sf"/>
</dbReference>
<dbReference type="InterPro" id="IPR012341">
    <property type="entry name" value="6hp_glycosidase-like_sf"/>
</dbReference>
<dbReference type="InterPro" id="IPR002037">
    <property type="entry name" value="Glyco_hydro_8"/>
</dbReference>
<dbReference type="InterPro" id="IPR019834">
    <property type="entry name" value="Glyco_hydro_8_CS"/>
</dbReference>
<dbReference type="NCBIfam" id="NF008305">
    <property type="entry name" value="PRK11097.1"/>
    <property type="match status" value="1"/>
</dbReference>
<dbReference type="Pfam" id="PF01270">
    <property type="entry name" value="Glyco_hydro_8"/>
    <property type="match status" value="1"/>
</dbReference>
<dbReference type="PRINTS" id="PR00735">
    <property type="entry name" value="GLHYDRLASE8"/>
</dbReference>
<dbReference type="SUPFAM" id="SSF48208">
    <property type="entry name" value="Six-hairpin glycosidases"/>
    <property type="match status" value="1"/>
</dbReference>
<dbReference type="PROSITE" id="PS00812">
    <property type="entry name" value="GLYCOSYL_HYDROL_F8"/>
    <property type="match status" value="1"/>
</dbReference>
<protein>
    <recommendedName>
        <fullName>Endoglucanase</fullName>
        <ecNumber>3.2.1.4</ecNumber>
    </recommendedName>
    <alternativeName>
        <fullName>Carboxymethylcellulase</fullName>
        <shortName>CMCase</shortName>
    </alternativeName>
    <alternativeName>
        <fullName>Cellulase</fullName>
    </alternativeName>
    <alternativeName>
        <fullName>Endo-1,4-beta-glucanase</fullName>
    </alternativeName>
</protein>
<feature type="signal peptide" evidence="2">
    <location>
        <begin position="1"/>
        <end position="21"/>
    </location>
</feature>
<feature type="chain" id="PRO_0000007939" description="Endoglucanase">
    <location>
        <begin position="22"/>
        <end position="368"/>
    </location>
</feature>
<feature type="active site" description="Proton donor" evidence="1">
    <location>
        <position position="55"/>
    </location>
</feature>
<feature type="active site" description="Nucleophile" evidence="3">
    <location>
        <position position="116"/>
    </location>
</feature>
<accession>Q8X5L9</accession>
<sequence>MNVLRSGLVTMLLLAAFSVQAACTWPAWEQFKKDYISQEGRVIDPSDARKITTSEGQSYGMFFALAANDRAAFDNILDWTQNNLAQGSLKERLPAWLWGKKENSKWEVLDSNSASDGDVWMAWSLLEAGRLWKEQRYTDIGSALLKRIAREEVVTVPGLGSMLLPGKVGFAEDNSWRFNPSYLPPTLAQYFTRFGAPWTTLRETNQRLLLETAPKGFSPDWVRYEKDKGWQLKAEKTLISSYDAIRVYMWVGMMPDSDPQKARMLNRFKPMATFTEKNGYPPEKVDVATGKAQGKGPVGFSAAMLPFLQNRDAQAVQRQRVADNFPGSDAYYNYVLTLFGQGWDQHRFRFSTKGELLPDWGQECANSH</sequence>
<reference key="1">
    <citation type="journal article" date="2001" name="Nature">
        <title>Genome sequence of enterohaemorrhagic Escherichia coli O157:H7.</title>
        <authorList>
            <person name="Perna N.T."/>
            <person name="Plunkett G. III"/>
            <person name="Burland V."/>
            <person name="Mau B."/>
            <person name="Glasner J.D."/>
            <person name="Rose D.J."/>
            <person name="Mayhew G.F."/>
            <person name="Evans P.S."/>
            <person name="Gregor J."/>
            <person name="Kirkpatrick H.A."/>
            <person name="Posfai G."/>
            <person name="Hackett J."/>
            <person name="Klink S."/>
            <person name="Boutin A."/>
            <person name="Shao Y."/>
            <person name="Miller L."/>
            <person name="Grotbeck E.J."/>
            <person name="Davis N.W."/>
            <person name="Lim A."/>
            <person name="Dimalanta E.T."/>
            <person name="Potamousis K."/>
            <person name="Apodaca J."/>
            <person name="Anantharaman T.S."/>
            <person name="Lin J."/>
            <person name="Yen G."/>
            <person name="Schwartz D.C."/>
            <person name="Welch R.A."/>
            <person name="Blattner F.R."/>
        </authorList>
    </citation>
    <scope>NUCLEOTIDE SEQUENCE [LARGE SCALE GENOMIC DNA]</scope>
    <source>
        <strain>O157:H7 / EDL933 / ATCC 700927 / EHEC</strain>
    </source>
</reference>
<reference key="2">
    <citation type="journal article" date="2001" name="DNA Res.">
        <title>Complete genome sequence of enterohemorrhagic Escherichia coli O157:H7 and genomic comparison with a laboratory strain K-12.</title>
        <authorList>
            <person name="Hayashi T."/>
            <person name="Makino K."/>
            <person name="Ohnishi M."/>
            <person name="Kurokawa K."/>
            <person name="Ishii K."/>
            <person name="Yokoyama K."/>
            <person name="Han C.-G."/>
            <person name="Ohtsubo E."/>
            <person name="Nakayama K."/>
            <person name="Murata T."/>
            <person name="Tanaka M."/>
            <person name="Tobe T."/>
            <person name="Iida T."/>
            <person name="Takami H."/>
            <person name="Honda T."/>
            <person name="Sasakawa C."/>
            <person name="Ogasawara N."/>
            <person name="Yasunaga T."/>
            <person name="Kuhara S."/>
            <person name="Shiba T."/>
            <person name="Hattori M."/>
            <person name="Shinagawa H."/>
        </authorList>
    </citation>
    <scope>NUCLEOTIDE SEQUENCE [LARGE SCALE GENOMIC DNA]</scope>
    <source>
        <strain>O157:H7 / Sakai / RIMD 0509952 / EHEC</strain>
    </source>
</reference>
<gene>
    <name type="primary">bcsZ</name>
    <name type="ordered locus">Z4946</name>
    <name type="ordered locus">ECs4411</name>
</gene>
<comment type="function">
    <text evidence="1">Hydrolyzes carboxymethylcellulose.</text>
</comment>
<comment type="catalytic activity">
    <reaction>
        <text>Endohydrolysis of (1-&gt;4)-beta-D-glucosidic linkages in cellulose, lichenin and cereal beta-D-glucans.</text>
        <dbReference type="EC" id="3.2.1.4"/>
    </reaction>
</comment>
<comment type="pathway">
    <text>Glycan metabolism; bacterial cellulose biosynthesis.</text>
</comment>
<comment type="subcellular location">
    <subcellularLocation>
        <location evidence="1">Secreted</location>
    </subcellularLocation>
</comment>
<comment type="similarity">
    <text evidence="4">Belongs to the glycosyl hydrolase 8 (cellulase D) family.</text>
</comment>
<evidence type="ECO:0000250" key="1"/>
<evidence type="ECO:0000255" key="2"/>
<evidence type="ECO:0000255" key="3">
    <source>
        <dbReference type="PROSITE-ProRule" id="PRU10058"/>
    </source>
</evidence>
<evidence type="ECO:0000305" key="4"/>
<proteinExistence type="inferred from homology"/>
<name>GUN_ECO57</name>
<organism>
    <name type="scientific">Escherichia coli O157:H7</name>
    <dbReference type="NCBI Taxonomy" id="83334"/>
    <lineage>
        <taxon>Bacteria</taxon>
        <taxon>Pseudomonadati</taxon>
        <taxon>Pseudomonadota</taxon>
        <taxon>Gammaproteobacteria</taxon>
        <taxon>Enterobacterales</taxon>
        <taxon>Enterobacteriaceae</taxon>
        <taxon>Escherichia</taxon>
    </lineage>
</organism>
<keyword id="KW-0119">Carbohydrate metabolism</keyword>
<keyword id="KW-0136">Cellulose degradation</keyword>
<keyword id="KW-0326">Glycosidase</keyword>
<keyword id="KW-0378">Hydrolase</keyword>
<keyword id="KW-0624">Polysaccharide degradation</keyword>
<keyword id="KW-1185">Reference proteome</keyword>
<keyword id="KW-0964">Secreted</keyword>
<keyword id="KW-0732">Signal</keyword>